<comment type="function">
    <text evidence="1">Catalyzes the attachment of serine to tRNA(Ser). Is also able to aminoacylate tRNA(Sec) with serine, to form the misacylated tRNA L-seryl-tRNA(Sec), which will be further converted into selenocysteinyl-tRNA(Sec).</text>
</comment>
<comment type="catalytic activity">
    <reaction evidence="1">
        <text>tRNA(Ser) + L-serine + ATP = L-seryl-tRNA(Ser) + AMP + diphosphate + H(+)</text>
        <dbReference type="Rhea" id="RHEA:12292"/>
        <dbReference type="Rhea" id="RHEA-COMP:9669"/>
        <dbReference type="Rhea" id="RHEA-COMP:9703"/>
        <dbReference type="ChEBI" id="CHEBI:15378"/>
        <dbReference type="ChEBI" id="CHEBI:30616"/>
        <dbReference type="ChEBI" id="CHEBI:33019"/>
        <dbReference type="ChEBI" id="CHEBI:33384"/>
        <dbReference type="ChEBI" id="CHEBI:78442"/>
        <dbReference type="ChEBI" id="CHEBI:78533"/>
        <dbReference type="ChEBI" id="CHEBI:456215"/>
        <dbReference type="EC" id="6.1.1.11"/>
    </reaction>
</comment>
<comment type="catalytic activity">
    <reaction evidence="1">
        <text>tRNA(Sec) + L-serine + ATP = L-seryl-tRNA(Sec) + AMP + diphosphate + H(+)</text>
        <dbReference type="Rhea" id="RHEA:42580"/>
        <dbReference type="Rhea" id="RHEA-COMP:9742"/>
        <dbReference type="Rhea" id="RHEA-COMP:10128"/>
        <dbReference type="ChEBI" id="CHEBI:15378"/>
        <dbReference type="ChEBI" id="CHEBI:30616"/>
        <dbReference type="ChEBI" id="CHEBI:33019"/>
        <dbReference type="ChEBI" id="CHEBI:33384"/>
        <dbReference type="ChEBI" id="CHEBI:78442"/>
        <dbReference type="ChEBI" id="CHEBI:78533"/>
        <dbReference type="ChEBI" id="CHEBI:456215"/>
        <dbReference type="EC" id="6.1.1.11"/>
    </reaction>
</comment>
<comment type="pathway">
    <text evidence="1">Aminoacyl-tRNA biosynthesis; selenocysteinyl-tRNA(Sec) biosynthesis; L-seryl-tRNA(Sec) from L-serine and tRNA(Sec): step 1/1.</text>
</comment>
<comment type="subunit">
    <text evidence="1">Homodimer. The tRNA molecule binds across the dimer.</text>
</comment>
<comment type="subcellular location">
    <subcellularLocation>
        <location evidence="1">Cytoplasm</location>
    </subcellularLocation>
</comment>
<comment type="domain">
    <text evidence="1">Consists of two distinct domains, a catalytic core and a N-terminal extension that is involved in tRNA binding.</text>
</comment>
<comment type="similarity">
    <text evidence="1">Belongs to the class-II aminoacyl-tRNA synthetase family. Type-1 seryl-tRNA synthetase subfamily.</text>
</comment>
<evidence type="ECO:0000255" key="1">
    <source>
        <dbReference type="HAMAP-Rule" id="MF_00176"/>
    </source>
</evidence>
<dbReference type="EC" id="6.1.1.11" evidence="1"/>
<dbReference type="EMBL" id="CP001096">
    <property type="protein sequence ID" value="ACF01688.1"/>
    <property type="molecule type" value="Genomic_DNA"/>
</dbReference>
<dbReference type="RefSeq" id="WP_011158394.1">
    <property type="nucleotide sequence ID" value="NC_011004.1"/>
</dbReference>
<dbReference type="SMR" id="B3Q6H9"/>
<dbReference type="GeneID" id="66893923"/>
<dbReference type="KEGG" id="rpt:Rpal_3185"/>
<dbReference type="HOGENOM" id="CLU_023797_1_1_5"/>
<dbReference type="OrthoDB" id="9804647at2"/>
<dbReference type="UniPathway" id="UPA00906">
    <property type="reaction ID" value="UER00895"/>
</dbReference>
<dbReference type="Proteomes" id="UP000001725">
    <property type="component" value="Chromosome"/>
</dbReference>
<dbReference type="GO" id="GO:0005737">
    <property type="term" value="C:cytoplasm"/>
    <property type="evidence" value="ECO:0007669"/>
    <property type="project" value="UniProtKB-SubCell"/>
</dbReference>
<dbReference type="GO" id="GO:0005524">
    <property type="term" value="F:ATP binding"/>
    <property type="evidence" value="ECO:0007669"/>
    <property type="project" value="UniProtKB-UniRule"/>
</dbReference>
<dbReference type="GO" id="GO:0004828">
    <property type="term" value="F:serine-tRNA ligase activity"/>
    <property type="evidence" value="ECO:0007669"/>
    <property type="project" value="UniProtKB-UniRule"/>
</dbReference>
<dbReference type="GO" id="GO:0016260">
    <property type="term" value="P:selenocysteine biosynthetic process"/>
    <property type="evidence" value="ECO:0007669"/>
    <property type="project" value="UniProtKB-UniRule"/>
</dbReference>
<dbReference type="GO" id="GO:0006434">
    <property type="term" value="P:seryl-tRNA aminoacylation"/>
    <property type="evidence" value="ECO:0007669"/>
    <property type="project" value="UniProtKB-UniRule"/>
</dbReference>
<dbReference type="CDD" id="cd00770">
    <property type="entry name" value="SerRS_core"/>
    <property type="match status" value="1"/>
</dbReference>
<dbReference type="Gene3D" id="3.30.930.10">
    <property type="entry name" value="Bira Bifunctional Protein, Domain 2"/>
    <property type="match status" value="1"/>
</dbReference>
<dbReference type="Gene3D" id="1.10.287.40">
    <property type="entry name" value="Serine-tRNA synthetase, tRNA binding domain"/>
    <property type="match status" value="1"/>
</dbReference>
<dbReference type="HAMAP" id="MF_00176">
    <property type="entry name" value="Ser_tRNA_synth_type1"/>
    <property type="match status" value="1"/>
</dbReference>
<dbReference type="InterPro" id="IPR002314">
    <property type="entry name" value="aa-tRNA-synt_IIb"/>
</dbReference>
<dbReference type="InterPro" id="IPR006195">
    <property type="entry name" value="aa-tRNA-synth_II"/>
</dbReference>
<dbReference type="InterPro" id="IPR045864">
    <property type="entry name" value="aa-tRNA-synth_II/BPL/LPL"/>
</dbReference>
<dbReference type="InterPro" id="IPR002317">
    <property type="entry name" value="Ser-tRNA-ligase_type_1"/>
</dbReference>
<dbReference type="InterPro" id="IPR015866">
    <property type="entry name" value="Ser-tRNA-synth_1_N"/>
</dbReference>
<dbReference type="InterPro" id="IPR042103">
    <property type="entry name" value="SerRS_1_N_sf"/>
</dbReference>
<dbReference type="InterPro" id="IPR033729">
    <property type="entry name" value="SerRS_core"/>
</dbReference>
<dbReference type="InterPro" id="IPR010978">
    <property type="entry name" value="tRNA-bd_arm"/>
</dbReference>
<dbReference type="NCBIfam" id="TIGR00414">
    <property type="entry name" value="serS"/>
    <property type="match status" value="1"/>
</dbReference>
<dbReference type="PANTHER" id="PTHR43697:SF1">
    <property type="entry name" value="SERINE--TRNA LIGASE"/>
    <property type="match status" value="1"/>
</dbReference>
<dbReference type="PANTHER" id="PTHR43697">
    <property type="entry name" value="SERYL-TRNA SYNTHETASE"/>
    <property type="match status" value="1"/>
</dbReference>
<dbReference type="Pfam" id="PF02403">
    <property type="entry name" value="Seryl_tRNA_N"/>
    <property type="match status" value="1"/>
</dbReference>
<dbReference type="Pfam" id="PF00587">
    <property type="entry name" value="tRNA-synt_2b"/>
    <property type="match status" value="1"/>
</dbReference>
<dbReference type="PIRSF" id="PIRSF001529">
    <property type="entry name" value="Ser-tRNA-synth_IIa"/>
    <property type="match status" value="1"/>
</dbReference>
<dbReference type="PRINTS" id="PR00981">
    <property type="entry name" value="TRNASYNTHSER"/>
</dbReference>
<dbReference type="SUPFAM" id="SSF55681">
    <property type="entry name" value="Class II aaRS and biotin synthetases"/>
    <property type="match status" value="1"/>
</dbReference>
<dbReference type="SUPFAM" id="SSF46589">
    <property type="entry name" value="tRNA-binding arm"/>
    <property type="match status" value="1"/>
</dbReference>
<dbReference type="PROSITE" id="PS50862">
    <property type="entry name" value="AA_TRNA_LIGASE_II"/>
    <property type="match status" value="1"/>
</dbReference>
<feature type="chain" id="PRO_1000098115" description="Serine--tRNA ligase">
    <location>
        <begin position="1"/>
        <end position="434"/>
    </location>
</feature>
<feature type="binding site" evidence="1">
    <location>
        <begin position="237"/>
        <end position="239"/>
    </location>
    <ligand>
        <name>L-serine</name>
        <dbReference type="ChEBI" id="CHEBI:33384"/>
    </ligand>
</feature>
<feature type="binding site" evidence="1">
    <location>
        <begin position="268"/>
        <end position="270"/>
    </location>
    <ligand>
        <name>ATP</name>
        <dbReference type="ChEBI" id="CHEBI:30616"/>
    </ligand>
</feature>
<feature type="binding site" evidence="1">
    <location>
        <position position="291"/>
    </location>
    <ligand>
        <name>L-serine</name>
        <dbReference type="ChEBI" id="CHEBI:33384"/>
    </ligand>
</feature>
<feature type="binding site" evidence="1">
    <location>
        <begin position="358"/>
        <end position="361"/>
    </location>
    <ligand>
        <name>ATP</name>
        <dbReference type="ChEBI" id="CHEBI:30616"/>
    </ligand>
</feature>
<feature type="binding site" evidence="1">
    <location>
        <position position="393"/>
    </location>
    <ligand>
        <name>L-serine</name>
        <dbReference type="ChEBI" id="CHEBI:33384"/>
    </ligand>
</feature>
<reference key="1">
    <citation type="submission" date="2008-05" db="EMBL/GenBank/DDBJ databases">
        <title>Complete sequence of Rhodopseudomonas palustris TIE-1.</title>
        <authorList>
            <consortium name="US DOE Joint Genome Institute"/>
            <person name="Lucas S."/>
            <person name="Copeland A."/>
            <person name="Lapidus A."/>
            <person name="Glavina del Rio T."/>
            <person name="Dalin E."/>
            <person name="Tice H."/>
            <person name="Pitluck S."/>
            <person name="Chain P."/>
            <person name="Malfatti S."/>
            <person name="Shin M."/>
            <person name="Vergez L."/>
            <person name="Lang D."/>
            <person name="Schmutz J."/>
            <person name="Larimer F."/>
            <person name="Land M."/>
            <person name="Hauser L."/>
            <person name="Kyrpides N."/>
            <person name="Mikhailova N."/>
            <person name="Emerson D."/>
            <person name="Newman D.K."/>
            <person name="Roden E."/>
            <person name="Richardson P."/>
        </authorList>
    </citation>
    <scope>NUCLEOTIDE SEQUENCE [LARGE SCALE GENOMIC DNA]</scope>
    <source>
        <strain>TIE-1</strain>
    </source>
</reference>
<sequence>MHDIKAIRDNPQAFDAAFTRRGLAPIAGSLMKLDEVRRAAVQAAEQAQARRNAASKEIGDAKKAKDNARAEALMAEVTELKTTMPALDAAVKEADEALKKALSEIPNLPLPEVPEGADEHGNVEHHRFGEKPSYSFTPKPHYDLGEALGMMDFEAAAKLSGARFTVLKKGLARLERAIGQFFLDVHTGDHGYTEVNPPLLVKDDAMFGTAQLPKFREDQFAAGAIGSGGEGYWLIPTAEVSLTNLVRESILDEKELPMRLTALTPCFRAEAGAAGRDTRGMIRQHQFTKVELVSITTPEQSKDEHERMLSCAEEVLRRLGLHYRVMTLCTGDMGFASQKTYDIEVWMPGQGEGGAYREISSCSVCGDFQARRMDARSRGSDGKPRFVHTLNGSGTAVGRALIAVIENYQQEDGSIAVPDVLQPYMGGLKVIAKA</sequence>
<gene>
    <name evidence="1" type="primary">serS</name>
    <name type="ordered locus">Rpal_3185</name>
</gene>
<accession>B3Q6H9</accession>
<name>SYS_RHOPT</name>
<protein>
    <recommendedName>
        <fullName evidence="1">Serine--tRNA ligase</fullName>
        <ecNumber evidence="1">6.1.1.11</ecNumber>
    </recommendedName>
    <alternativeName>
        <fullName evidence="1">Seryl-tRNA synthetase</fullName>
        <shortName evidence="1">SerRS</shortName>
    </alternativeName>
    <alternativeName>
        <fullName evidence="1">Seryl-tRNA(Ser/Sec) synthetase</fullName>
    </alternativeName>
</protein>
<organism>
    <name type="scientific">Rhodopseudomonas palustris (strain TIE-1)</name>
    <dbReference type="NCBI Taxonomy" id="395960"/>
    <lineage>
        <taxon>Bacteria</taxon>
        <taxon>Pseudomonadati</taxon>
        <taxon>Pseudomonadota</taxon>
        <taxon>Alphaproteobacteria</taxon>
        <taxon>Hyphomicrobiales</taxon>
        <taxon>Nitrobacteraceae</taxon>
        <taxon>Rhodopseudomonas</taxon>
    </lineage>
</organism>
<proteinExistence type="inferred from homology"/>
<keyword id="KW-0030">Aminoacyl-tRNA synthetase</keyword>
<keyword id="KW-0067">ATP-binding</keyword>
<keyword id="KW-0963">Cytoplasm</keyword>
<keyword id="KW-0436">Ligase</keyword>
<keyword id="KW-0547">Nucleotide-binding</keyword>
<keyword id="KW-0648">Protein biosynthesis</keyword>